<dbReference type="EMBL" id="L77117">
    <property type="protein sequence ID" value="AAB99592.1"/>
    <property type="molecule type" value="Genomic_DNA"/>
</dbReference>
<dbReference type="PIR" id="E64495">
    <property type="entry name" value="E64495"/>
</dbReference>
<dbReference type="RefSeq" id="WP_010871090.1">
    <property type="nucleotide sequence ID" value="NC_000909.1"/>
</dbReference>
<dbReference type="SMR" id="Q58961"/>
<dbReference type="STRING" id="243232.MJ_1566"/>
<dbReference type="PaxDb" id="243232-MJ_1566"/>
<dbReference type="EnsemblBacteria" id="AAB99592">
    <property type="protein sequence ID" value="AAB99592"/>
    <property type="gene ID" value="MJ_1566"/>
</dbReference>
<dbReference type="GeneID" id="1452474"/>
<dbReference type="KEGG" id="mja:MJ_1566"/>
<dbReference type="eggNOG" id="arCOG08283">
    <property type="taxonomic scope" value="Archaea"/>
</dbReference>
<dbReference type="HOGENOM" id="CLU_611953_0_0_2"/>
<dbReference type="InParanoid" id="Q58961"/>
<dbReference type="OrthoDB" id="65172at2157"/>
<dbReference type="Proteomes" id="UP000000805">
    <property type="component" value="Chromosome"/>
</dbReference>
<dbReference type="GO" id="GO:0005886">
    <property type="term" value="C:plasma membrane"/>
    <property type="evidence" value="ECO:0007669"/>
    <property type="project" value="UniProtKB-SubCell"/>
</dbReference>
<sequence>MGFKYLKIKNPKVILTEWIPFGKNYMTEFIDRITLKEYQRKRIKYFTASERRDIRYKAVFETSEYQTTVNIIEFIPETSVKFTAEIIGERKKDVFIYVDYLGRCIYSSEITKAGDEEEIVSLDNLSFVIPDLILDSSRIMSHLISPPQRYLLETLYGEIKVYKHVTVLTETVVNIDENTILEISQVIGAVKNIIEIDDGLIIFGDFGIFISHKNPEKFEKFIYYYPFIRSITGVSRDLFFKLNNIASKLEVISNTLASGVDLEDITEIRGELSRIDRELAVIEIVCGYLKEIVEFLNSSYPPNFGDFDLMILEKVEAERKLRRLIYRIAEIENILKSNDSLATSLTRLLTTISEDLERKIANQLAENTKYQVAIGEAMEVLEIGIFGVYALEAAHILLLTSGKDEILHHIKILGFPLEFWIILVVTILGVYVGKIVIEYRKKKVLGE</sequence>
<gene>
    <name type="ordered locus">MJ1566</name>
</gene>
<reference key="1">
    <citation type="journal article" date="1996" name="Science">
        <title>Complete genome sequence of the methanogenic archaeon, Methanococcus jannaschii.</title>
        <authorList>
            <person name="Bult C.J."/>
            <person name="White O."/>
            <person name="Olsen G.J."/>
            <person name="Zhou L."/>
            <person name="Fleischmann R.D."/>
            <person name="Sutton G.G."/>
            <person name="Blake J.A."/>
            <person name="FitzGerald L.M."/>
            <person name="Clayton R.A."/>
            <person name="Gocayne J.D."/>
            <person name="Kerlavage A.R."/>
            <person name="Dougherty B.A."/>
            <person name="Tomb J.-F."/>
            <person name="Adams M.D."/>
            <person name="Reich C.I."/>
            <person name="Overbeek R."/>
            <person name="Kirkness E.F."/>
            <person name="Weinstock K.G."/>
            <person name="Merrick J.M."/>
            <person name="Glodek A."/>
            <person name="Scott J.L."/>
            <person name="Geoghagen N.S.M."/>
            <person name="Weidman J.F."/>
            <person name="Fuhrmann J.L."/>
            <person name="Nguyen D."/>
            <person name="Utterback T.R."/>
            <person name="Kelley J.M."/>
            <person name="Peterson J.D."/>
            <person name="Sadow P.W."/>
            <person name="Hanna M.C."/>
            <person name="Cotton M.D."/>
            <person name="Roberts K.M."/>
            <person name="Hurst M.A."/>
            <person name="Kaine B.P."/>
            <person name="Borodovsky M."/>
            <person name="Klenk H.-P."/>
            <person name="Fraser C.M."/>
            <person name="Smith H.O."/>
            <person name="Woese C.R."/>
            <person name="Venter J.C."/>
        </authorList>
    </citation>
    <scope>NUCLEOTIDE SEQUENCE [LARGE SCALE GENOMIC DNA]</scope>
    <source>
        <strain>ATCC 43067 / DSM 2661 / JAL-1 / JCM 10045 / NBRC 100440</strain>
    </source>
</reference>
<name>Y1566_METJA</name>
<evidence type="ECO:0000255" key="1"/>
<evidence type="ECO:0000305" key="2"/>
<accession>Q58961</accession>
<keyword id="KW-1003">Cell membrane</keyword>
<keyword id="KW-0472">Membrane</keyword>
<keyword id="KW-1185">Reference proteome</keyword>
<keyword id="KW-0812">Transmembrane</keyword>
<keyword id="KW-1133">Transmembrane helix</keyword>
<feature type="chain" id="PRO_0000107414" description="Uncharacterized protein MJ1566">
    <location>
        <begin position="1"/>
        <end position="447"/>
    </location>
</feature>
<feature type="transmembrane region" description="Helical" evidence="1">
    <location>
        <begin position="380"/>
        <end position="400"/>
    </location>
</feature>
<feature type="transmembrane region" description="Helical" evidence="1">
    <location>
        <begin position="412"/>
        <end position="432"/>
    </location>
</feature>
<organism>
    <name type="scientific">Methanocaldococcus jannaschii (strain ATCC 43067 / DSM 2661 / JAL-1 / JCM 10045 / NBRC 100440)</name>
    <name type="common">Methanococcus jannaschii</name>
    <dbReference type="NCBI Taxonomy" id="243232"/>
    <lineage>
        <taxon>Archaea</taxon>
        <taxon>Methanobacteriati</taxon>
        <taxon>Methanobacteriota</taxon>
        <taxon>Methanomada group</taxon>
        <taxon>Methanococci</taxon>
        <taxon>Methanococcales</taxon>
        <taxon>Methanocaldococcaceae</taxon>
        <taxon>Methanocaldococcus</taxon>
    </lineage>
</organism>
<proteinExistence type="predicted"/>
<protein>
    <recommendedName>
        <fullName>Uncharacterized protein MJ1566</fullName>
    </recommendedName>
</protein>
<comment type="subcellular location">
    <subcellularLocation>
        <location evidence="2">Cell membrane</location>
        <topology evidence="2">Multi-pass membrane protein</topology>
    </subcellularLocation>
</comment>